<feature type="chain" id="PRO_1000059602" description="Chaperone protein DnaK">
    <location>
        <begin position="1"/>
        <end position="653"/>
    </location>
</feature>
<feature type="region of interest" description="Disordered" evidence="2">
    <location>
        <begin position="613"/>
        <end position="653"/>
    </location>
</feature>
<feature type="compositionally biased region" description="Basic and acidic residues" evidence="2">
    <location>
        <begin position="644"/>
        <end position="653"/>
    </location>
</feature>
<feature type="modified residue" description="Phosphothreonine; by autocatalysis" evidence="1">
    <location>
        <position position="203"/>
    </location>
</feature>
<comment type="function">
    <text evidence="1">Acts as a chaperone.</text>
</comment>
<comment type="induction">
    <text evidence="1">By stress conditions e.g. heat shock.</text>
</comment>
<comment type="similarity">
    <text evidence="1">Belongs to the heat shock protein 70 family.</text>
</comment>
<organism>
    <name type="scientific">Methylibium petroleiphilum (strain ATCC BAA-1232 / LMG 22953 / PM1)</name>
    <dbReference type="NCBI Taxonomy" id="420662"/>
    <lineage>
        <taxon>Bacteria</taxon>
        <taxon>Pseudomonadati</taxon>
        <taxon>Pseudomonadota</taxon>
        <taxon>Betaproteobacteria</taxon>
        <taxon>Burkholderiales</taxon>
        <taxon>Sphaerotilaceae</taxon>
        <taxon>Methylibium</taxon>
    </lineage>
</organism>
<name>DNAK_METPP</name>
<protein>
    <recommendedName>
        <fullName evidence="1">Chaperone protein DnaK</fullName>
    </recommendedName>
    <alternativeName>
        <fullName evidence="1">HSP70</fullName>
    </alternativeName>
    <alternativeName>
        <fullName evidence="1">Heat shock 70 kDa protein</fullName>
    </alternativeName>
    <alternativeName>
        <fullName evidence="1">Heat shock protein 70</fullName>
    </alternativeName>
</protein>
<keyword id="KW-0067">ATP-binding</keyword>
<keyword id="KW-0143">Chaperone</keyword>
<keyword id="KW-0547">Nucleotide-binding</keyword>
<keyword id="KW-0597">Phosphoprotein</keyword>
<keyword id="KW-1185">Reference proteome</keyword>
<keyword id="KW-0346">Stress response</keyword>
<reference key="1">
    <citation type="journal article" date="2007" name="J. Bacteriol.">
        <title>Whole-genome analysis of the methyl tert-butyl ether-degrading beta-proteobacterium Methylibium petroleiphilum PM1.</title>
        <authorList>
            <person name="Kane S.R."/>
            <person name="Chakicherla A.Y."/>
            <person name="Chain P.S.G."/>
            <person name="Schmidt R."/>
            <person name="Shin M.W."/>
            <person name="Legler T.C."/>
            <person name="Scow K.M."/>
            <person name="Larimer F.W."/>
            <person name="Lucas S.M."/>
            <person name="Richardson P.M."/>
            <person name="Hristova K.R."/>
        </authorList>
    </citation>
    <scope>NUCLEOTIDE SEQUENCE [LARGE SCALE GENOMIC DNA]</scope>
    <source>
        <strain>ATCC BAA-1232 / LMG 22953 / PM1</strain>
    </source>
</reference>
<sequence>MAKIIGIDLGTTNSCVAIMEGNTTKVIENSEGARTTPSIIAYQEDGEVLVGASAKRQAVTNPRNTLYAVKRLIGRKFTEKEVQKDIDLMPYTIAAAENGDAWVEVRGNKLAPPQVSAEVLRKMKKTAEDYLGETVTEAVITVPAYFNDAQRQATKDAGRIAGLDVKRIINEPTAAALAFGLDKHNDGKGGDRKIAVYDLGGGTFDISIIEIADVDGEMQFEVLSTNGDTFLGGEDFDQRVIDYIIAEFKKEQGVDLSKDVLALQRLKEAAEKAKIELSNSTQTDINLPYVTADASGPKHLNIKLTRAKLEALVEELIERTIAPCRTAIKDAGVSTSQINDVILVGGMTRMPKVQEKVKEFFGQEPRKDVNPDEAVAVGAAIQGQVLAGDRKDVLLLDVTPLSLGIETLGGVMTKMITKNTTIPTKFAQTFSTADDNQPAVTIKVFQGERELASGNKMLGEFNLEGIAPAPRGMPQIEVSFDIDANGILHVGAKDKGTGKENKITIKANSGLSEEEIQKMVKDAELNAAEDKKKLELVQARNQADAMVHSVKKSLAEHGDKLDAGEKEKIESALKDAETALKGEDKAEIEAKTEALMSASQKLGEKVYADMQAAQAAAGAAAGGGEAPAAEATASKPADDNVVDAEFKEVKDQK</sequence>
<dbReference type="EMBL" id="CP000555">
    <property type="protein sequence ID" value="ABM95453.1"/>
    <property type="molecule type" value="Genomic_DNA"/>
</dbReference>
<dbReference type="RefSeq" id="WP_011830086.1">
    <property type="nucleotide sequence ID" value="NC_008825.1"/>
</dbReference>
<dbReference type="SMR" id="A2SIR4"/>
<dbReference type="STRING" id="420662.Mpe_A2498"/>
<dbReference type="KEGG" id="mpt:Mpe_A2498"/>
<dbReference type="eggNOG" id="COG0443">
    <property type="taxonomic scope" value="Bacteria"/>
</dbReference>
<dbReference type="HOGENOM" id="CLU_005965_2_1_4"/>
<dbReference type="Proteomes" id="UP000000366">
    <property type="component" value="Chromosome"/>
</dbReference>
<dbReference type="GO" id="GO:0005524">
    <property type="term" value="F:ATP binding"/>
    <property type="evidence" value="ECO:0007669"/>
    <property type="project" value="UniProtKB-UniRule"/>
</dbReference>
<dbReference type="GO" id="GO:0140662">
    <property type="term" value="F:ATP-dependent protein folding chaperone"/>
    <property type="evidence" value="ECO:0007669"/>
    <property type="project" value="InterPro"/>
</dbReference>
<dbReference type="GO" id="GO:0051082">
    <property type="term" value="F:unfolded protein binding"/>
    <property type="evidence" value="ECO:0007669"/>
    <property type="project" value="InterPro"/>
</dbReference>
<dbReference type="CDD" id="cd10234">
    <property type="entry name" value="ASKHA_NBD_HSP70_DnaK-like"/>
    <property type="match status" value="1"/>
</dbReference>
<dbReference type="FunFam" id="2.60.34.10:FF:000014">
    <property type="entry name" value="Chaperone protein DnaK HSP70"/>
    <property type="match status" value="1"/>
</dbReference>
<dbReference type="FunFam" id="1.20.1270.10:FF:000001">
    <property type="entry name" value="Molecular chaperone DnaK"/>
    <property type="match status" value="1"/>
</dbReference>
<dbReference type="FunFam" id="3.30.420.40:FF:000004">
    <property type="entry name" value="Molecular chaperone DnaK"/>
    <property type="match status" value="1"/>
</dbReference>
<dbReference type="FunFam" id="3.90.640.10:FF:000003">
    <property type="entry name" value="Molecular chaperone DnaK"/>
    <property type="match status" value="1"/>
</dbReference>
<dbReference type="Gene3D" id="1.20.1270.10">
    <property type="match status" value="1"/>
</dbReference>
<dbReference type="Gene3D" id="3.30.420.40">
    <property type="match status" value="2"/>
</dbReference>
<dbReference type="Gene3D" id="3.90.640.10">
    <property type="entry name" value="Actin, Chain A, domain 4"/>
    <property type="match status" value="1"/>
</dbReference>
<dbReference type="Gene3D" id="2.60.34.10">
    <property type="entry name" value="Substrate Binding Domain Of DNAk, Chain A, domain 1"/>
    <property type="match status" value="1"/>
</dbReference>
<dbReference type="HAMAP" id="MF_00332">
    <property type="entry name" value="DnaK"/>
    <property type="match status" value="1"/>
</dbReference>
<dbReference type="InterPro" id="IPR043129">
    <property type="entry name" value="ATPase_NBD"/>
</dbReference>
<dbReference type="InterPro" id="IPR012725">
    <property type="entry name" value="Chaperone_DnaK"/>
</dbReference>
<dbReference type="InterPro" id="IPR018181">
    <property type="entry name" value="Heat_shock_70_CS"/>
</dbReference>
<dbReference type="InterPro" id="IPR029048">
    <property type="entry name" value="HSP70_C_sf"/>
</dbReference>
<dbReference type="InterPro" id="IPR029047">
    <property type="entry name" value="HSP70_peptide-bd_sf"/>
</dbReference>
<dbReference type="InterPro" id="IPR013126">
    <property type="entry name" value="Hsp_70_fam"/>
</dbReference>
<dbReference type="NCBIfam" id="NF001413">
    <property type="entry name" value="PRK00290.1"/>
    <property type="match status" value="1"/>
</dbReference>
<dbReference type="NCBIfam" id="NF003520">
    <property type="entry name" value="PRK05183.1"/>
    <property type="match status" value="1"/>
</dbReference>
<dbReference type="NCBIfam" id="TIGR02350">
    <property type="entry name" value="prok_dnaK"/>
    <property type="match status" value="1"/>
</dbReference>
<dbReference type="PANTHER" id="PTHR19375">
    <property type="entry name" value="HEAT SHOCK PROTEIN 70KDA"/>
    <property type="match status" value="1"/>
</dbReference>
<dbReference type="Pfam" id="PF00012">
    <property type="entry name" value="HSP70"/>
    <property type="match status" value="1"/>
</dbReference>
<dbReference type="PRINTS" id="PR00301">
    <property type="entry name" value="HEATSHOCK70"/>
</dbReference>
<dbReference type="SUPFAM" id="SSF53067">
    <property type="entry name" value="Actin-like ATPase domain"/>
    <property type="match status" value="2"/>
</dbReference>
<dbReference type="SUPFAM" id="SSF100934">
    <property type="entry name" value="Heat shock protein 70kD (HSP70), C-terminal subdomain"/>
    <property type="match status" value="1"/>
</dbReference>
<dbReference type="SUPFAM" id="SSF100920">
    <property type="entry name" value="Heat shock protein 70kD (HSP70), peptide-binding domain"/>
    <property type="match status" value="1"/>
</dbReference>
<dbReference type="PROSITE" id="PS00297">
    <property type="entry name" value="HSP70_1"/>
    <property type="match status" value="1"/>
</dbReference>
<dbReference type="PROSITE" id="PS00329">
    <property type="entry name" value="HSP70_2"/>
    <property type="match status" value="1"/>
</dbReference>
<dbReference type="PROSITE" id="PS01036">
    <property type="entry name" value="HSP70_3"/>
    <property type="match status" value="1"/>
</dbReference>
<accession>A2SIR4</accession>
<evidence type="ECO:0000255" key="1">
    <source>
        <dbReference type="HAMAP-Rule" id="MF_00332"/>
    </source>
</evidence>
<evidence type="ECO:0000256" key="2">
    <source>
        <dbReference type="SAM" id="MobiDB-lite"/>
    </source>
</evidence>
<proteinExistence type="inferred from homology"/>
<gene>
    <name evidence="1" type="primary">dnaK</name>
    <name type="ordered locus">Mpe_A2498</name>
</gene>